<feature type="chain" id="PRO_0000365228" description="Probable DNA ligase">
    <location>
        <begin position="1"/>
        <end position="520"/>
    </location>
</feature>
<feature type="active site" description="N6-AMP-lysine intermediate" evidence="1">
    <location>
        <position position="215"/>
    </location>
</feature>
<feature type="binding site" evidence="1">
    <location>
        <position position="213"/>
    </location>
    <ligand>
        <name>ATP</name>
        <dbReference type="ChEBI" id="CHEBI:30616"/>
    </ligand>
</feature>
<feature type="binding site" evidence="1">
    <location>
        <position position="220"/>
    </location>
    <ligand>
        <name>ATP</name>
        <dbReference type="ChEBI" id="CHEBI:30616"/>
    </ligand>
</feature>
<feature type="binding site" evidence="1">
    <location>
        <position position="235"/>
    </location>
    <ligand>
        <name>ATP</name>
        <dbReference type="ChEBI" id="CHEBI:30616"/>
    </ligand>
</feature>
<feature type="binding site" evidence="1">
    <location>
        <position position="264"/>
    </location>
    <ligand>
        <name>ATP</name>
        <dbReference type="ChEBI" id="CHEBI:30616"/>
    </ligand>
</feature>
<feature type="binding site" evidence="1">
    <location>
        <position position="300"/>
    </location>
    <ligand>
        <name>ATP</name>
        <dbReference type="ChEBI" id="CHEBI:30616"/>
    </ligand>
</feature>
<feature type="binding site" evidence="1">
    <location>
        <position position="372"/>
    </location>
    <ligand>
        <name>ATP</name>
        <dbReference type="ChEBI" id="CHEBI:30616"/>
    </ligand>
</feature>
<feature type="binding site" evidence="1">
    <location>
        <position position="378"/>
    </location>
    <ligand>
        <name>ATP</name>
        <dbReference type="ChEBI" id="CHEBI:30616"/>
    </ligand>
</feature>
<comment type="function">
    <text evidence="1">DNA ligase that seals nicks in double-stranded DNA during DNA replication, DNA recombination and DNA repair.</text>
</comment>
<comment type="catalytic activity">
    <reaction evidence="1">
        <text>ATP + (deoxyribonucleotide)n-3'-hydroxyl + 5'-phospho-(deoxyribonucleotide)m = (deoxyribonucleotide)n+m + AMP + diphosphate.</text>
        <dbReference type="EC" id="6.5.1.1"/>
    </reaction>
</comment>
<comment type="cofactor">
    <cofactor evidence="1">
        <name>Mg(2+)</name>
        <dbReference type="ChEBI" id="CHEBI:18420"/>
    </cofactor>
</comment>
<comment type="similarity">
    <text evidence="1">Belongs to the ATP-dependent DNA ligase family.</text>
</comment>
<name>DNLI_MYCSJ</name>
<organism>
    <name type="scientific">Mycobacterium sp. (strain JLS)</name>
    <dbReference type="NCBI Taxonomy" id="164757"/>
    <lineage>
        <taxon>Bacteria</taxon>
        <taxon>Bacillati</taxon>
        <taxon>Actinomycetota</taxon>
        <taxon>Actinomycetes</taxon>
        <taxon>Mycobacteriales</taxon>
        <taxon>Mycobacteriaceae</taxon>
        <taxon>Mycobacterium</taxon>
    </lineage>
</organism>
<dbReference type="EC" id="6.5.1.1" evidence="1"/>
<dbReference type="EMBL" id="CP000580">
    <property type="protein sequence ID" value="ABN97569.1"/>
    <property type="molecule type" value="Genomic_DNA"/>
</dbReference>
<dbReference type="SMR" id="A3PXE2"/>
<dbReference type="KEGG" id="mjl:Mjls_1780"/>
<dbReference type="HOGENOM" id="CLU_005138_6_1_11"/>
<dbReference type="BioCyc" id="MSP164757:G1G8C-1796-MONOMER"/>
<dbReference type="GO" id="GO:0005524">
    <property type="term" value="F:ATP binding"/>
    <property type="evidence" value="ECO:0007669"/>
    <property type="project" value="UniProtKB-UniRule"/>
</dbReference>
<dbReference type="GO" id="GO:0003677">
    <property type="term" value="F:DNA binding"/>
    <property type="evidence" value="ECO:0007669"/>
    <property type="project" value="InterPro"/>
</dbReference>
<dbReference type="GO" id="GO:0003910">
    <property type="term" value="F:DNA ligase (ATP) activity"/>
    <property type="evidence" value="ECO:0007669"/>
    <property type="project" value="UniProtKB-UniRule"/>
</dbReference>
<dbReference type="GO" id="GO:0046872">
    <property type="term" value="F:metal ion binding"/>
    <property type="evidence" value="ECO:0007669"/>
    <property type="project" value="UniProtKB-KW"/>
</dbReference>
<dbReference type="GO" id="GO:0051301">
    <property type="term" value="P:cell division"/>
    <property type="evidence" value="ECO:0007669"/>
    <property type="project" value="UniProtKB-KW"/>
</dbReference>
<dbReference type="GO" id="GO:0071897">
    <property type="term" value="P:DNA biosynthetic process"/>
    <property type="evidence" value="ECO:0007669"/>
    <property type="project" value="InterPro"/>
</dbReference>
<dbReference type="GO" id="GO:0006310">
    <property type="term" value="P:DNA recombination"/>
    <property type="evidence" value="ECO:0007669"/>
    <property type="project" value="UniProtKB-UniRule"/>
</dbReference>
<dbReference type="GO" id="GO:0006281">
    <property type="term" value="P:DNA repair"/>
    <property type="evidence" value="ECO:0007669"/>
    <property type="project" value="UniProtKB-UniRule"/>
</dbReference>
<dbReference type="GO" id="GO:0006260">
    <property type="term" value="P:DNA replication"/>
    <property type="evidence" value="ECO:0007669"/>
    <property type="project" value="UniProtKB-UniRule"/>
</dbReference>
<dbReference type="CDD" id="cd07901">
    <property type="entry name" value="Adenylation_DNA_ligase_Arch_LigB"/>
    <property type="match status" value="1"/>
</dbReference>
<dbReference type="CDD" id="cd07972">
    <property type="entry name" value="OBF_DNA_ligase_Arch_LigB"/>
    <property type="match status" value="1"/>
</dbReference>
<dbReference type="FunFam" id="2.40.50.140:FF:000163">
    <property type="entry name" value="Probable DNA ligase"/>
    <property type="match status" value="1"/>
</dbReference>
<dbReference type="Gene3D" id="1.10.3260.10">
    <property type="entry name" value="DNA ligase, ATP-dependent, N-terminal domain"/>
    <property type="match status" value="1"/>
</dbReference>
<dbReference type="Gene3D" id="3.30.470.30">
    <property type="entry name" value="DNA ligase/mRNA capping enzyme"/>
    <property type="match status" value="1"/>
</dbReference>
<dbReference type="Gene3D" id="2.40.50.140">
    <property type="entry name" value="Nucleic acid-binding proteins"/>
    <property type="match status" value="1"/>
</dbReference>
<dbReference type="HAMAP" id="MF_00407">
    <property type="entry name" value="DNA_ligase"/>
    <property type="match status" value="1"/>
</dbReference>
<dbReference type="InterPro" id="IPR050191">
    <property type="entry name" value="ATP-dep_DNA_ligase"/>
</dbReference>
<dbReference type="InterPro" id="IPR022865">
    <property type="entry name" value="DNA_ligae_ATP-dep_bac/arc"/>
</dbReference>
<dbReference type="InterPro" id="IPR000977">
    <property type="entry name" value="DNA_ligase_ATP-dep"/>
</dbReference>
<dbReference type="InterPro" id="IPR012309">
    <property type="entry name" value="DNA_ligase_ATP-dep_C"/>
</dbReference>
<dbReference type="InterPro" id="IPR012310">
    <property type="entry name" value="DNA_ligase_ATP-dep_cent"/>
</dbReference>
<dbReference type="InterPro" id="IPR016059">
    <property type="entry name" value="DNA_ligase_ATP-dep_CS"/>
</dbReference>
<dbReference type="InterPro" id="IPR012308">
    <property type="entry name" value="DNA_ligase_ATP-dep_N"/>
</dbReference>
<dbReference type="InterPro" id="IPR036599">
    <property type="entry name" value="DNA_ligase_N_sf"/>
</dbReference>
<dbReference type="InterPro" id="IPR012340">
    <property type="entry name" value="NA-bd_OB-fold"/>
</dbReference>
<dbReference type="NCBIfam" id="TIGR00574">
    <property type="entry name" value="dnl1"/>
    <property type="match status" value="1"/>
</dbReference>
<dbReference type="NCBIfam" id="NF002868">
    <property type="entry name" value="PRK03180.1"/>
    <property type="match status" value="1"/>
</dbReference>
<dbReference type="PANTHER" id="PTHR45674">
    <property type="entry name" value="DNA LIGASE 1/3 FAMILY MEMBER"/>
    <property type="match status" value="1"/>
</dbReference>
<dbReference type="PANTHER" id="PTHR45674:SF13">
    <property type="entry name" value="DNA LIGASE-RELATED"/>
    <property type="match status" value="1"/>
</dbReference>
<dbReference type="Pfam" id="PF04679">
    <property type="entry name" value="DNA_ligase_A_C"/>
    <property type="match status" value="1"/>
</dbReference>
<dbReference type="Pfam" id="PF01068">
    <property type="entry name" value="DNA_ligase_A_M"/>
    <property type="match status" value="1"/>
</dbReference>
<dbReference type="Pfam" id="PF04675">
    <property type="entry name" value="DNA_ligase_A_N"/>
    <property type="match status" value="1"/>
</dbReference>
<dbReference type="SUPFAM" id="SSF117018">
    <property type="entry name" value="ATP-dependent DNA ligase DNA-binding domain"/>
    <property type="match status" value="1"/>
</dbReference>
<dbReference type="SUPFAM" id="SSF56091">
    <property type="entry name" value="DNA ligase/mRNA capping enzyme, catalytic domain"/>
    <property type="match status" value="1"/>
</dbReference>
<dbReference type="SUPFAM" id="SSF50249">
    <property type="entry name" value="Nucleic acid-binding proteins"/>
    <property type="match status" value="1"/>
</dbReference>
<dbReference type="PROSITE" id="PS00697">
    <property type="entry name" value="DNA_LIGASE_A1"/>
    <property type="match status" value="1"/>
</dbReference>
<dbReference type="PROSITE" id="PS00333">
    <property type="entry name" value="DNA_LIGASE_A2"/>
    <property type="match status" value="1"/>
</dbReference>
<dbReference type="PROSITE" id="PS50160">
    <property type="entry name" value="DNA_LIGASE_A3"/>
    <property type="match status" value="1"/>
</dbReference>
<accession>A3PXE2</accession>
<reference key="1">
    <citation type="submission" date="2007-02" db="EMBL/GenBank/DDBJ databases">
        <title>Complete sequence of Mycobacterium sp. JLS.</title>
        <authorList>
            <consortium name="US DOE Joint Genome Institute"/>
            <person name="Copeland A."/>
            <person name="Lucas S."/>
            <person name="Lapidus A."/>
            <person name="Barry K."/>
            <person name="Detter J.C."/>
            <person name="Glavina del Rio T."/>
            <person name="Hammon N."/>
            <person name="Israni S."/>
            <person name="Dalin E."/>
            <person name="Tice H."/>
            <person name="Pitluck S."/>
            <person name="Chain P."/>
            <person name="Malfatti S."/>
            <person name="Shin M."/>
            <person name="Vergez L."/>
            <person name="Schmutz J."/>
            <person name="Larimer F."/>
            <person name="Land M."/>
            <person name="Hauser L."/>
            <person name="Kyrpides N."/>
            <person name="Mikhailova N."/>
            <person name="Miller C.D."/>
            <person name="Anderson A.J."/>
            <person name="Sims R.C."/>
            <person name="Richardson P."/>
        </authorList>
    </citation>
    <scope>NUCLEOTIDE SEQUENCE [LARGE SCALE GENOMIC DNA]</scope>
    <source>
        <strain>JLS</strain>
    </source>
</reference>
<protein>
    <recommendedName>
        <fullName evidence="1">Probable DNA ligase</fullName>
        <ecNumber evidence="1">6.5.1.1</ecNumber>
    </recommendedName>
    <alternativeName>
        <fullName evidence="1">Polydeoxyribonucleotide synthase [ATP]</fullName>
    </alternativeName>
</protein>
<sequence length="520" mass="54705">MLLVDVATASVDVGAMSSRLAKTARIADLLSRAGTEQDARLVAVTVAWLSGELPQRQIGVGWAALRSLPAPAAAPTLTVTAVDAVFSEIGAVAGKGSQARRAGLIAELFAAATDVEQTFLRRLLTGELRQGALIGVMADAVAKAADVPAARVRRAAMLAGDLPAVAAAVLAGGDAALARFTLQVGRPVGPMLAQTATGVADALDRLGGTAVFEAKLDGARVQIHRRGSDVSVYTRSLDDVTARLPEVVEAALALPVTDLIADAEAIALRPDGRPHRFQVTASRFGRAAARATQPLSVFMFDLLHVDGADLLDQPTSDRVRVLDDLVPAAHRVDRLVTDDGAAAQRFLEATLAAGHEGVMAKSPNAPYEAGRRGAGWLKVKPVHTLDLVVLAVEWGSGRRTGKLSNIHLGARDPATGGFVMLGKTFKGMTDAMLDWQTARFLELADPAAQPATSGRDPTDGHTVKVRPEQVVEIAFDGVQGSTRYPGGMALRFARVLRYRDDKSPAEADTVDTVRAFYEHG</sequence>
<proteinExistence type="inferred from homology"/>
<keyword id="KW-0067">ATP-binding</keyword>
<keyword id="KW-0131">Cell cycle</keyword>
<keyword id="KW-0132">Cell division</keyword>
<keyword id="KW-0227">DNA damage</keyword>
<keyword id="KW-0233">DNA recombination</keyword>
<keyword id="KW-0234">DNA repair</keyword>
<keyword id="KW-0235">DNA replication</keyword>
<keyword id="KW-0436">Ligase</keyword>
<keyword id="KW-0460">Magnesium</keyword>
<keyword id="KW-0479">Metal-binding</keyword>
<keyword id="KW-0547">Nucleotide-binding</keyword>
<gene>
    <name evidence="1" type="primary">lig</name>
    <name type="ordered locus">Mjls_1780</name>
</gene>
<evidence type="ECO:0000255" key="1">
    <source>
        <dbReference type="HAMAP-Rule" id="MF_00407"/>
    </source>
</evidence>